<sequence>MEISTNPPSSSSSSVSSSIINGSLHHHIITRSDHYPTTFVQADSSSFKQVVQMLTGSSSPRSPDSPRPPTTPSGKGNFVIPPIKTAQPKKHSGNKLYERRSHGGFNNNLKNSLMINTLMIGGGGAGSPRFSPRNQEILSPSCLDFPKLALNSPVTPLKQGTNGNEGDPFDKMSPLSEEERGIADKGYYLHRSPISTPRDSEPQLLPLFPVTSPRLSPEM</sequence>
<keyword id="KW-0539">Nucleus</keyword>
<keyword id="KW-0597">Phosphoprotein</keyword>
<keyword id="KW-1185">Reference proteome</keyword>
<evidence type="ECO:0000250" key="1">
    <source>
        <dbReference type="UniProtKB" id="O23660"/>
    </source>
</evidence>
<evidence type="ECO:0000250" key="2">
    <source>
        <dbReference type="UniProtKB" id="Q5M750"/>
    </source>
</evidence>
<evidence type="ECO:0000250" key="3">
    <source>
        <dbReference type="UniProtKB" id="Q9FHZ3"/>
    </source>
</evidence>
<evidence type="ECO:0000250" key="4">
    <source>
        <dbReference type="UniProtKB" id="Q9M9F0"/>
    </source>
</evidence>
<evidence type="ECO:0000256" key="5">
    <source>
        <dbReference type="SAM" id="MobiDB-lite"/>
    </source>
</evidence>
<evidence type="ECO:0000269" key="6">
    <source>
    </source>
</evidence>
<evidence type="ECO:0000303" key="7">
    <source>
    </source>
</evidence>
<evidence type="ECO:0000303" key="8">
    <source>
    </source>
</evidence>
<evidence type="ECO:0000305" key="9"/>
<evidence type="ECO:0000312" key="10">
    <source>
        <dbReference type="Araport" id="AT3G15300"/>
    </source>
</evidence>
<evidence type="ECO:0000312" key="11">
    <source>
        <dbReference type="EMBL" id="BAB02159.1"/>
    </source>
</evidence>
<dbReference type="EMBL" id="AP000413">
    <property type="protein sequence ID" value="BAB02159.1"/>
    <property type="molecule type" value="Genomic_DNA"/>
</dbReference>
<dbReference type="EMBL" id="CP002686">
    <property type="protein sequence ID" value="AEE75642.1"/>
    <property type="molecule type" value="Genomic_DNA"/>
</dbReference>
<dbReference type="EMBL" id="BT010686">
    <property type="protein sequence ID" value="AAR20743.1"/>
    <property type="molecule type" value="mRNA"/>
</dbReference>
<dbReference type="EMBL" id="BT011503">
    <property type="protein sequence ID" value="AAS00343.1"/>
    <property type="molecule type" value="mRNA"/>
</dbReference>
<dbReference type="RefSeq" id="NP_188148.1">
    <property type="nucleotide sequence ID" value="NM_112393.3"/>
</dbReference>
<dbReference type="FunCoup" id="Q9LDZ1">
    <property type="interactions" value="2"/>
</dbReference>
<dbReference type="STRING" id="3702.Q9LDZ1"/>
<dbReference type="iPTMnet" id="Q9LDZ1"/>
<dbReference type="PaxDb" id="3702-AT3G15300.1"/>
<dbReference type="ProteomicsDB" id="242779"/>
<dbReference type="EnsemblPlants" id="AT3G15300.1">
    <property type="protein sequence ID" value="AT3G15300.1"/>
    <property type="gene ID" value="AT3G15300"/>
</dbReference>
<dbReference type="GeneID" id="820761"/>
<dbReference type="Gramene" id="AT3G15300.1">
    <property type="protein sequence ID" value="AT3G15300.1"/>
    <property type="gene ID" value="AT3G15300"/>
</dbReference>
<dbReference type="KEGG" id="ath:AT3G15300"/>
<dbReference type="Araport" id="AT3G15300"/>
<dbReference type="TAIR" id="AT3G15300">
    <property type="gene designation" value="MVQ4"/>
</dbReference>
<dbReference type="eggNOG" id="ENOG502RIDK">
    <property type="taxonomic scope" value="Eukaryota"/>
</dbReference>
<dbReference type="HOGENOM" id="CLU_069496_0_0_1"/>
<dbReference type="InParanoid" id="Q9LDZ1"/>
<dbReference type="OMA" id="MINTLMV"/>
<dbReference type="OrthoDB" id="784396at2759"/>
<dbReference type="PhylomeDB" id="Q9LDZ1"/>
<dbReference type="PRO" id="PR:Q9LDZ1"/>
<dbReference type="Proteomes" id="UP000006548">
    <property type="component" value="Chromosome 3"/>
</dbReference>
<dbReference type="ExpressionAtlas" id="Q9LDZ1">
    <property type="expression patterns" value="baseline and differential"/>
</dbReference>
<dbReference type="GO" id="GO:0005634">
    <property type="term" value="C:nucleus"/>
    <property type="evidence" value="ECO:0007669"/>
    <property type="project" value="UniProtKB-SubCell"/>
</dbReference>
<dbReference type="InterPro" id="IPR008889">
    <property type="entry name" value="VQ"/>
</dbReference>
<dbReference type="InterPro" id="IPR039611">
    <property type="entry name" value="VQ_4/11/13/19/31/33"/>
</dbReference>
<dbReference type="PANTHER" id="PTHR33402">
    <property type="entry name" value="VQ MOTIF-CONTAINING PROTEIN 11-LIKE"/>
    <property type="match status" value="1"/>
</dbReference>
<dbReference type="PANTHER" id="PTHR33402:SF44">
    <property type="entry name" value="VQ MOTIF-CONTAINING PROTEIN 19"/>
    <property type="match status" value="1"/>
</dbReference>
<dbReference type="Pfam" id="PF05678">
    <property type="entry name" value="VQ"/>
    <property type="match status" value="1"/>
</dbReference>
<organism>
    <name type="scientific">Arabidopsis thaliana</name>
    <name type="common">Mouse-ear cress</name>
    <dbReference type="NCBI Taxonomy" id="3702"/>
    <lineage>
        <taxon>Eukaryota</taxon>
        <taxon>Viridiplantae</taxon>
        <taxon>Streptophyta</taxon>
        <taxon>Embryophyta</taxon>
        <taxon>Tracheophyta</taxon>
        <taxon>Spermatophyta</taxon>
        <taxon>Magnoliopsida</taxon>
        <taxon>eudicotyledons</taxon>
        <taxon>Gunneridae</taxon>
        <taxon>Pentapetalae</taxon>
        <taxon>rosids</taxon>
        <taxon>malvids</taxon>
        <taxon>Brassicales</taxon>
        <taxon>Brassicaceae</taxon>
        <taxon>Camelineae</taxon>
        <taxon>Arabidopsis</taxon>
    </lineage>
</organism>
<accession>Q9LDZ1</accession>
<gene>
    <name evidence="7" type="primary">VQ19</name>
    <name evidence="8" type="synonym">MVQ4</name>
    <name evidence="10" type="ordered locus">At3g15300</name>
    <name evidence="11" type="ORF">K7L4.10</name>
</gene>
<proteinExistence type="evidence at protein level"/>
<feature type="chain" id="PRO_0000432316" description="VQ motif-containing protein 19">
    <location>
        <begin position="1"/>
        <end position="219"/>
    </location>
</feature>
<feature type="region of interest" description="Disordered" evidence="5">
    <location>
        <begin position="52"/>
        <end position="94"/>
    </location>
</feature>
<feature type="region of interest" description="Disordered" evidence="5">
    <location>
        <begin position="156"/>
        <end position="177"/>
    </location>
</feature>
<feature type="region of interest" description="Disordered" evidence="5">
    <location>
        <begin position="190"/>
        <end position="219"/>
    </location>
</feature>
<feature type="short sequence motif" description="VQ" evidence="9">
    <location>
        <begin position="47"/>
        <end position="56"/>
    </location>
</feature>
<feature type="modified residue" description="Phosphoserine" evidence="6">
    <location>
        <position position="59"/>
    </location>
</feature>
<feature type="modified residue" description="Phosphoserine" evidence="6">
    <location>
        <position position="65"/>
    </location>
</feature>
<feature type="modified residue" description="Phosphoserine" evidence="6">
    <location>
        <position position="127"/>
    </location>
</feature>
<feature type="modified residue" description="Phosphoserine" evidence="2">
    <location>
        <position position="131"/>
    </location>
</feature>
<feature type="modified residue" description="Phosphoserine" evidence="3">
    <location>
        <position position="139"/>
    </location>
</feature>
<feature type="modified residue" description="Phosphoserine" evidence="6">
    <location>
        <position position="141"/>
    </location>
</feature>
<feature type="modified residue" description="Phosphoserine" evidence="6">
    <location>
        <position position="152"/>
    </location>
</feature>
<feature type="modified residue" description="Phosphothreonine" evidence="6">
    <location>
        <position position="155"/>
    </location>
</feature>
<feature type="modified residue" description="Phosphoserine" evidence="2">
    <location>
        <position position="192"/>
    </location>
</feature>
<feature type="modified residue" description="Phosphoserine" evidence="3">
    <location>
        <position position="195"/>
    </location>
</feature>
<feature type="modified residue" description="Phosphothreonine" evidence="6">
    <location>
        <position position="196"/>
    </location>
</feature>
<feature type="modified residue" description="Phosphothreonine" evidence="1">
    <location>
        <position position="211"/>
    </location>
</feature>
<feature type="modified residue" description="Phosphoserine" evidence="6">
    <location>
        <position position="212"/>
    </location>
</feature>
<feature type="modified residue" description="Phosphoserine" evidence="1">
    <location>
        <position position="216"/>
    </location>
</feature>
<name>VQ19_ARATH</name>
<protein>
    <recommendedName>
        <fullName evidence="7">VQ motif-containing protein 19</fullName>
        <shortName evidence="7">AtVQ19</shortName>
    </recommendedName>
    <alternativeName>
        <fullName evidence="8">MPK3/6-targeted VQ-motif-containing protein 4</fullName>
    </alternativeName>
</protein>
<reference key="1">
    <citation type="journal article" date="2000" name="DNA Res.">
        <title>Structural analysis of Arabidopsis thaliana chromosome 3. II. Sequence features of the 4,251,695 bp regions covered by 90 P1, TAC and BAC clones.</title>
        <authorList>
            <person name="Kaneko T."/>
            <person name="Katoh T."/>
            <person name="Sato S."/>
            <person name="Nakamura Y."/>
            <person name="Asamizu E."/>
            <person name="Tabata S."/>
        </authorList>
    </citation>
    <scope>NUCLEOTIDE SEQUENCE [LARGE SCALE GENOMIC DNA]</scope>
    <source>
        <strain>cv. Columbia</strain>
    </source>
</reference>
<reference key="2">
    <citation type="journal article" date="2017" name="Plant J.">
        <title>Araport11: a complete reannotation of the Arabidopsis thaliana reference genome.</title>
        <authorList>
            <person name="Cheng C.Y."/>
            <person name="Krishnakumar V."/>
            <person name="Chan A.P."/>
            <person name="Thibaud-Nissen F."/>
            <person name="Schobel S."/>
            <person name="Town C.D."/>
        </authorList>
    </citation>
    <scope>GENOME REANNOTATION</scope>
    <source>
        <strain>cv. Columbia</strain>
    </source>
</reference>
<reference key="3">
    <citation type="submission" date="2004-01" db="EMBL/GenBank/DDBJ databases">
        <title>Arabidopsis ORF clones.</title>
        <authorList>
            <person name="Shinn P."/>
            <person name="Chen H."/>
            <person name="Cheuk R.F."/>
            <person name="Kim C.J."/>
            <person name="Ecker J.R."/>
        </authorList>
    </citation>
    <scope>NUCLEOTIDE SEQUENCE [LARGE SCALE MRNA]</scope>
    <source>
        <strain>cv. Columbia</strain>
    </source>
</reference>
<reference key="4">
    <citation type="journal article" date="2012" name="Plant Physiol.">
        <title>Structural and functional analysis of VQ motif-containing proteins in Arabidopsis as interacting proteins of WRKY transcription factors.</title>
        <authorList>
            <person name="Cheng Y."/>
            <person name="Zhou Y."/>
            <person name="Yang Y."/>
            <person name="Chi Y.J."/>
            <person name="Zhou J."/>
            <person name="Chen J.Y."/>
            <person name="Wang F."/>
            <person name="Fan B."/>
            <person name="Shi K."/>
            <person name="Zhou Y.H."/>
            <person name="Yu J.Q."/>
            <person name="Chen Z."/>
        </authorList>
    </citation>
    <scope>GENE FAMILY</scope>
    <scope>NOMENCLATURE</scope>
</reference>
<reference key="5">
    <citation type="journal article" date="2014" name="New Phytol.">
        <title>The Arabidopsis thaliana mitogen-activated protein kinases MPK3 and MPK6 target a subclass of 'VQ-motif'-containing proteins to regulate immune responses.</title>
        <authorList>
            <person name="Pecher P."/>
            <person name="Eschen-Lippold L."/>
            <person name="Herklotz S."/>
            <person name="Kuhle K."/>
            <person name="Naumann K."/>
            <person name="Bethke G."/>
            <person name="Uhrig J."/>
            <person name="Weyhe M."/>
            <person name="Scheel D."/>
            <person name="Lee J."/>
        </authorList>
    </citation>
    <scope>IDENTIFICATION BY MASS SPECTROMETRY</scope>
    <scope>PHOSPHORYLATION AT SER-59; SER-65; SER-127; SER-141; SER-152; THR-155; THR-196 AND SER-212</scope>
</reference>
<comment type="function">
    <text evidence="4">May modulate WRKY transcription factor activities.</text>
</comment>
<comment type="subcellular location">
    <subcellularLocation>
        <location evidence="4">Nucleus</location>
    </subcellularLocation>
</comment>
<comment type="PTM">
    <text evidence="6">Phosphorylated on serine and threonine residues by MPK6.</text>
</comment>